<evidence type="ECO:0000255" key="1">
    <source>
        <dbReference type="HAMAP-Rule" id="MF_00111"/>
    </source>
</evidence>
<evidence type="ECO:0000305" key="2"/>
<accession>P19670</accession>
<accession>Q03225</accession>
<protein>
    <recommendedName>
        <fullName evidence="1">UDP-N-acetylglucosamine 1-carboxyvinyltransferase 2</fullName>
        <ecNumber evidence="1">2.5.1.7</ecNumber>
    </recommendedName>
    <alternativeName>
        <fullName evidence="1">Enoylpyruvate transferase 2</fullName>
    </alternativeName>
    <alternativeName>
        <fullName evidence="1">UDP-N-acetylglucosamine enolpyruvyl transferase 2</fullName>
        <shortName evidence="1">EPT 2</shortName>
    </alternativeName>
</protein>
<gene>
    <name evidence="1" type="primary">murAB</name>
    <name type="synonym">murA</name>
    <name type="synonym">murZ</name>
    <name type="ordered locus">BSU37100</name>
</gene>
<comment type="function">
    <text evidence="1">Cell wall formation. Adds enolpyruvyl to UDP-N-acetylglucosamine.</text>
</comment>
<comment type="catalytic activity">
    <reaction evidence="1">
        <text>phosphoenolpyruvate + UDP-N-acetyl-alpha-D-glucosamine = UDP-N-acetyl-3-O-(1-carboxyvinyl)-alpha-D-glucosamine + phosphate</text>
        <dbReference type="Rhea" id="RHEA:18681"/>
        <dbReference type="ChEBI" id="CHEBI:43474"/>
        <dbReference type="ChEBI" id="CHEBI:57705"/>
        <dbReference type="ChEBI" id="CHEBI:58702"/>
        <dbReference type="ChEBI" id="CHEBI:68483"/>
        <dbReference type="EC" id="2.5.1.7"/>
    </reaction>
</comment>
<comment type="pathway">
    <text evidence="1">Cell wall biogenesis; peptidoglycan biosynthesis.</text>
</comment>
<comment type="subcellular location">
    <subcellularLocation>
        <location evidence="1">Cytoplasm</location>
    </subcellularLocation>
</comment>
<comment type="similarity">
    <text evidence="1">Belongs to the EPSP synthase family. MurA subfamily.</text>
</comment>
<reference key="1">
    <citation type="journal article" date="1997" name="Microbiology">
        <title>The Bacillus subtilis genome from gerBC (311 degrees) to licR (334 degrees).</title>
        <authorList>
            <person name="Presecan E."/>
            <person name="Moszer I."/>
            <person name="Boursier L."/>
            <person name="Cruz Ramos H."/>
            <person name="De La Fuente V."/>
            <person name="Hullo M.-F."/>
            <person name="Lelong C."/>
            <person name="Schleich S."/>
            <person name="Sekowska A."/>
            <person name="Song B.H."/>
            <person name="Villani G."/>
            <person name="Kunst F."/>
            <person name="Danchin A."/>
            <person name="Glaser P."/>
        </authorList>
    </citation>
    <scope>NUCLEOTIDE SEQUENCE [GENOMIC DNA]</scope>
    <source>
        <strain>168</strain>
    </source>
</reference>
<reference key="2">
    <citation type="journal article" date="1997" name="Nature">
        <title>The complete genome sequence of the Gram-positive bacterium Bacillus subtilis.</title>
        <authorList>
            <person name="Kunst F."/>
            <person name="Ogasawara N."/>
            <person name="Moszer I."/>
            <person name="Albertini A.M."/>
            <person name="Alloni G."/>
            <person name="Azevedo V."/>
            <person name="Bertero M.G."/>
            <person name="Bessieres P."/>
            <person name="Bolotin A."/>
            <person name="Borchert S."/>
            <person name="Borriss R."/>
            <person name="Boursier L."/>
            <person name="Brans A."/>
            <person name="Braun M."/>
            <person name="Brignell S.C."/>
            <person name="Bron S."/>
            <person name="Brouillet S."/>
            <person name="Bruschi C.V."/>
            <person name="Caldwell B."/>
            <person name="Capuano V."/>
            <person name="Carter N.M."/>
            <person name="Choi S.-K."/>
            <person name="Codani J.-J."/>
            <person name="Connerton I.F."/>
            <person name="Cummings N.J."/>
            <person name="Daniel R.A."/>
            <person name="Denizot F."/>
            <person name="Devine K.M."/>
            <person name="Duesterhoeft A."/>
            <person name="Ehrlich S.D."/>
            <person name="Emmerson P.T."/>
            <person name="Entian K.-D."/>
            <person name="Errington J."/>
            <person name="Fabret C."/>
            <person name="Ferrari E."/>
            <person name="Foulger D."/>
            <person name="Fritz C."/>
            <person name="Fujita M."/>
            <person name="Fujita Y."/>
            <person name="Fuma S."/>
            <person name="Galizzi A."/>
            <person name="Galleron N."/>
            <person name="Ghim S.-Y."/>
            <person name="Glaser P."/>
            <person name="Goffeau A."/>
            <person name="Golightly E.J."/>
            <person name="Grandi G."/>
            <person name="Guiseppi G."/>
            <person name="Guy B.J."/>
            <person name="Haga K."/>
            <person name="Haiech J."/>
            <person name="Harwood C.R."/>
            <person name="Henaut A."/>
            <person name="Hilbert H."/>
            <person name="Holsappel S."/>
            <person name="Hosono S."/>
            <person name="Hullo M.-F."/>
            <person name="Itaya M."/>
            <person name="Jones L.-M."/>
            <person name="Joris B."/>
            <person name="Karamata D."/>
            <person name="Kasahara Y."/>
            <person name="Klaerr-Blanchard M."/>
            <person name="Klein C."/>
            <person name="Kobayashi Y."/>
            <person name="Koetter P."/>
            <person name="Koningstein G."/>
            <person name="Krogh S."/>
            <person name="Kumano M."/>
            <person name="Kurita K."/>
            <person name="Lapidus A."/>
            <person name="Lardinois S."/>
            <person name="Lauber J."/>
            <person name="Lazarevic V."/>
            <person name="Lee S.-M."/>
            <person name="Levine A."/>
            <person name="Liu H."/>
            <person name="Masuda S."/>
            <person name="Mauel C."/>
            <person name="Medigue C."/>
            <person name="Medina N."/>
            <person name="Mellado R.P."/>
            <person name="Mizuno M."/>
            <person name="Moestl D."/>
            <person name="Nakai S."/>
            <person name="Noback M."/>
            <person name="Noone D."/>
            <person name="O'Reilly M."/>
            <person name="Ogawa K."/>
            <person name="Ogiwara A."/>
            <person name="Oudega B."/>
            <person name="Park S.-H."/>
            <person name="Parro V."/>
            <person name="Pohl T.M."/>
            <person name="Portetelle D."/>
            <person name="Porwollik S."/>
            <person name="Prescott A.M."/>
            <person name="Presecan E."/>
            <person name="Pujic P."/>
            <person name="Purnelle B."/>
            <person name="Rapoport G."/>
            <person name="Rey M."/>
            <person name="Reynolds S."/>
            <person name="Rieger M."/>
            <person name="Rivolta C."/>
            <person name="Rocha E."/>
            <person name="Roche B."/>
            <person name="Rose M."/>
            <person name="Sadaie Y."/>
            <person name="Sato T."/>
            <person name="Scanlan E."/>
            <person name="Schleich S."/>
            <person name="Schroeter R."/>
            <person name="Scoffone F."/>
            <person name="Sekiguchi J."/>
            <person name="Sekowska A."/>
            <person name="Seror S.J."/>
            <person name="Serror P."/>
            <person name="Shin B.-S."/>
            <person name="Soldo B."/>
            <person name="Sorokin A."/>
            <person name="Tacconi E."/>
            <person name="Takagi T."/>
            <person name="Takahashi H."/>
            <person name="Takemaru K."/>
            <person name="Takeuchi M."/>
            <person name="Tamakoshi A."/>
            <person name="Tanaka T."/>
            <person name="Terpstra P."/>
            <person name="Tognoni A."/>
            <person name="Tosato V."/>
            <person name="Uchiyama S."/>
            <person name="Vandenbol M."/>
            <person name="Vannier F."/>
            <person name="Vassarotti A."/>
            <person name="Viari A."/>
            <person name="Wambutt R."/>
            <person name="Wedler E."/>
            <person name="Wedler H."/>
            <person name="Weitzenegger T."/>
            <person name="Winters P."/>
            <person name="Wipat A."/>
            <person name="Yamamoto H."/>
            <person name="Yamane K."/>
            <person name="Yasumoto K."/>
            <person name="Yata K."/>
            <person name="Yoshida K."/>
            <person name="Yoshikawa H.-F."/>
            <person name="Zumstein E."/>
            <person name="Yoshikawa H."/>
            <person name="Danchin A."/>
        </authorList>
    </citation>
    <scope>NUCLEOTIDE SEQUENCE [LARGE SCALE GENOMIC DNA]</scope>
    <source>
        <strain>168</strain>
    </source>
</reference>
<reference key="3">
    <citation type="journal article" date="2009" name="Microbiology">
        <title>From a consortium sequence to a unified sequence: the Bacillus subtilis 168 reference genome a decade later.</title>
        <authorList>
            <person name="Barbe V."/>
            <person name="Cruveiller S."/>
            <person name="Kunst F."/>
            <person name="Lenoble P."/>
            <person name="Meurice G."/>
            <person name="Sekowska A."/>
            <person name="Vallenet D."/>
            <person name="Wang T."/>
            <person name="Moszer I."/>
            <person name="Medigue C."/>
            <person name="Danchin A."/>
        </authorList>
    </citation>
    <scope>SEQUENCE REVISION TO 374</scope>
</reference>
<reference key="4">
    <citation type="journal article" date="1988" name="J. Bacteriol.">
        <title>Complete sequence and transcriptional analysis of the spo0F region of the Bacillus subtilis chromosome.</title>
        <authorList>
            <person name="Trach K."/>
            <person name="Chapman J.W."/>
            <person name="Piggot P.J."/>
            <person name="Lecoq D."/>
            <person name="Hoch J.A."/>
        </authorList>
    </citation>
    <scope>NUCLEOTIDE SEQUENCE [GENOMIC DNA] OF 1-350</scope>
    <source>
        <strain>168 / JH642</strain>
    </source>
</reference>
<reference key="5">
    <citation type="journal article" date="1993" name="J. Bacteriol.">
        <title>Identification of a putative Bacillus subtilis rho gene.</title>
        <authorList>
            <person name="Quirk P.G."/>
            <person name="Dunkley E.A. Jr."/>
            <person name="Lee P."/>
            <person name="Krulwich T.A."/>
        </authorList>
    </citation>
    <scope>NUCLEOTIDE SEQUENCE [GENOMIC DNA] OF 351-429</scope>
    <source>
        <strain>BD99 / MS119</strain>
    </source>
</reference>
<reference key="6">
    <citation type="book" date="2000" name="Proceedings of Genome 2000: international conference of microbial and model genomes">
        <title>Possible roles of the murAA (murA) and murAB (murZ) duett in B.subtilis.</title>
        <authorList>
            <person name="Studer R.E."/>
            <person name="Roten C.A.H."/>
            <person name="Kamarata D."/>
        </authorList>
    </citation>
    <scope>CHARACTERIZATION</scope>
</reference>
<name>MURA2_BACSU</name>
<proteinExistence type="evidence at protein level"/>
<dbReference type="EC" id="2.5.1.7" evidence="1"/>
<dbReference type="EMBL" id="Z49782">
    <property type="protein sequence ID" value="CAA89875.1"/>
    <property type="molecule type" value="Genomic_DNA"/>
</dbReference>
<dbReference type="EMBL" id="AL009126">
    <property type="protein sequence ID" value="CAB15727.2"/>
    <property type="molecule type" value="Genomic_DNA"/>
</dbReference>
<dbReference type="EMBL" id="M22039">
    <property type="status" value="NOT_ANNOTATED_CDS"/>
    <property type="molecule type" value="Unassigned_DNA"/>
</dbReference>
<dbReference type="EMBL" id="M97678">
    <property type="protein sequence ID" value="AAA02898.1"/>
    <property type="molecule type" value="Unassigned_DNA"/>
</dbReference>
<dbReference type="PIR" id="S55428">
    <property type="entry name" value="G32354"/>
</dbReference>
<dbReference type="RefSeq" id="NP_391591.2">
    <property type="nucleotide sequence ID" value="NC_000964.3"/>
</dbReference>
<dbReference type="RefSeq" id="WP_003227628.1">
    <property type="nucleotide sequence ID" value="NZ_OZ025638.1"/>
</dbReference>
<dbReference type="SMR" id="P19670"/>
<dbReference type="FunCoup" id="P19670">
    <property type="interactions" value="398"/>
</dbReference>
<dbReference type="STRING" id="224308.BSU37100"/>
<dbReference type="jPOST" id="P19670"/>
<dbReference type="PaxDb" id="224308-BSU37100"/>
<dbReference type="EnsemblBacteria" id="CAB15727">
    <property type="protein sequence ID" value="CAB15727"/>
    <property type="gene ID" value="BSU_37100"/>
</dbReference>
<dbReference type="GeneID" id="937038"/>
<dbReference type="KEGG" id="bsu:BSU37100"/>
<dbReference type="PATRIC" id="fig|224308.179.peg.4019"/>
<dbReference type="eggNOG" id="COG0766">
    <property type="taxonomic scope" value="Bacteria"/>
</dbReference>
<dbReference type="InParanoid" id="P19670"/>
<dbReference type="OrthoDB" id="9803760at2"/>
<dbReference type="PhylomeDB" id="P19670"/>
<dbReference type="BioCyc" id="BSUB:BSU37100-MONOMER"/>
<dbReference type="UniPathway" id="UPA00219"/>
<dbReference type="Proteomes" id="UP000001570">
    <property type="component" value="Chromosome"/>
</dbReference>
<dbReference type="GO" id="GO:0005737">
    <property type="term" value="C:cytoplasm"/>
    <property type="evidence" value="ECO:0007669"/>
    <property type="project" value="UniProtKB-SubCell"/>
</dbReference>
<dbReference type="GO" id="GO:0008760">
    <property type="term" value="F:UDP-N-acetylglucosamine 1-carboxyvinyltransferase activity"/>
    <property type="evidence" value="ECO:0007669"/>
    <property type="project" value="UniProtKB-UniRule"/>
</dbReference>
<dbReference type="GO" id="GO:0051301">
    <property type="term" value="P:cell division"/>
    <property type="evidence" value="ECO:0007669"/>
    <property type="project" value="UniProtKB-KW"/>
</dbReference>
<dbReference type="GO" id="GO:0071555">
    <property type="term" value="P:cell wall organization"/>
    <property type="evidence" value="ECO:0007669"/>
    <property type="project" value="UniProtKB-KW"/>
</dbReference>
<dbReference type="GO" id="GO:0009252">
    <property type="term" value="P:peptidoglycan biosynthetic process"/>
    <property type="evidence" value="ECO:0007669"/>
    <property type="project" value="UniProtKB-UniRule"/>
</dbReference>
<dbReference type="GO" id="GO:0008360">
    <property type="term" value="P:regulation of cell shape"/>
    <property type="evidence" value="ECO:0007669"/>
    <property type="project" value="UniProtKB-KW"/>
</dbReference>
<dbReference type="GO" id="GO:0019277">
    <property type="term" value="P:UDP-N-acetylgalactosamine biosynthetic process"/>
    <property type="evidence" value="ECO:0007669"/>
    <property type="project" value="InterPro"/>
</dbReference>
<dbReference type="CDD" id="cd01555">
    <property type="entry name" value="UdpNAET"/>
    <property type="match status" value="1"/>
</dbReference>
<dbReference type="FunFam" id="3.65.10.10:FF:000001">
    <property type="entry name" value="UDP-N-acetylglucosamine 1-carboxyvinyltransferase"/>
    <property type="match status" value="1"/>
</dbReference>
<dbReference type="Gene3D" id="3.65.10.10">
    <property type="entry name" value="Enolpyruvate transferase domain"/>
    <property type="match status" value="2"/>
</dbReference>
<dbReference type="HAMAP" id="MF_00111">
    <property type="entry name" value="MurA"/>
    <property type="match status" value="1"/>
</dbReference>
<dbReference type="InterPro" id="IPR001986">
    <property type="entry name" value="Enolpyruvate_Tfrase_dom"/>
</dbReference>
<dbReference type="InterPro" id="IPR036968">
    <property type="entry name" value="Enolpyruvate_Tfrase_sf"/>
</dbReference>
<dbReference type="InterPro" id="IPR050068">
    <property type="entry name" value="MurA_subfamily"/>
</dbReference>
<dbReference type="InterPro" id="IPR013792">
    <property type="entry name" value="RNA3'P_cycl/enolpyr_Trfase_a/b"/>
</dbReference>
<dbReference type="InterPro" id="IPR005750">
    <property type="entry name" value="UDP_GlcNAc_COvinyl_MurA"/>
</dbReference>
<dbReference type="NCBIfam" id="TIGR01072">
    <property type="entry name" value="murA"/>
    <property type="match status" value="1"/>
</dbReference>
<dbReference type="NCBIfam" id="NF006873">
    <property type="entry name" value="PRK09369.1"/>
    <property type="match status" value="1"/>
</dbReference>
<dbReference type="NCBIfam" id="NF009470">
    <property type="entry name" value="PRK12830.1"/>
    <property type="match status" value="1"/>
</dbReference>
<dbReference type="PANTHER" id="PTHR43783">
    <property type="entry name" value="UDP-N-ACETYLGLUCOSAMINE 1-CARBOXYVINYLTRANSFERASE"/>
    <property type="match status" value="1"/>
</dbReference>
<dbReference type="PANTHER" id="PTHR43783:SF2">
    <property type="entry name" value="UDP-N-ACETYLGLUCOSAMINE 1-CARBOXYVINYLTRANSFERASE 2"/>
    <property type="match status" value="1"/>
</dbReference>
<dbReference type="Pfam" id="PF00275">
    <property type="entry name" value="EPSP_synthase"/>
    <property type="match status" value="1"/>
</dbReference>
<dbReference type="SUPFAM" id="SSF55205">
    <property type="entry name" value="EPT/RTPC-like"/>
    <property type="match status" value="1"/>
</dbReference>
<sequence length="429" mass="46000">MEKLNIAGGDSLNGTVHISGAKNSAVALIPATILANSEVTIEGLPEISDIETLRDLLKEIGGNVHFENGEMVVDPTSMISMPLPNGKVKKLRASYYLMGAMLGRFKQAVIGLPGGCHLGPRPIDQHIKGFEALGAEVTNEQGAIYLRAERLRGARIYLDVVSVGATINIMLAAVLAEGKTIIENAAKEPEIIDVATLLTSMGAKIKGAGTNVIRIDGVKELHGCKHTIIPDRIEAGTFMIAGAAMGKEVIIDNVIPTHLESLTAKLREMGYHIETSDDQLLIVGGQKNLKPVDVKTLVYPGFPTDLQQPMTALLTRAKGTSVVTDTIYSARFKHIDELRRMGANMKVEGRSAIITGPVELQGAKVKASDLRAGACLVVAGLMADGVTEITGLEHIDRGYSSLEKKLEGLGATIWRERMTDEEIEQLQNS</sequence>
<keyword id="KW-0131">Cell cycle</keyword>
<keyword id="KW-0132">Cell division</keyword>
<keyword id="KW-0133">Cell shape</keyword>
<keyword id="KW-0961">Cell wall biogenesis/degradation</keyword>
<keyword id="KW-0963">Cytoplasm</keyword>
<keyword id="KW-0573">Peptidoglycan synthesis</keyword>
<keyword id="KW-0670">Pyruvate</keyword>
<keyword id="KW-1185">Reference proteome</keyword>
<keyword id="KW-0808">Transferase</keyword>
<organism>
    <name type="scientific">Bacillus subtilis (strain 168)</name>
    <dbReference type="NCBI Taxonomy" id="224308"/>
    <lineage>
        <taxon>Bacteria</taxon>
        <taxon>Bacillati</taxon>
        <taxon>Bacillota</taxon>
        <taxon>Bacilli</taxon>
        <taxon>Bacillales</taxon>
        <taxon>Bacillaceae</taxon>
        <taxon>Bacillus</taxon>
    </lineage>
</organism>
<feature type="chain" id="PRO_0000178849" description="UDP-N-acetylglucosamine 1-carboxyvinyltransferase 2">
    <location>
        <begin position="1"/>
        <end position="429"/>
    </location>
</feature>
<feature type="active site" description="Proton donor" evidence="1">
    <location>
        <position position="116"/>
    </location>
</feature>
<feature type="binding site" evidence="1">
    <location>
        <begin position="22"/>
        <end position="23"/>
    </location>
    <ligand>
        <name>phosphoenolpyruvate</name>
        <dbReference type="ChEBI" id="CHEBI:58702"/>
    </ligand>
</feature>
<feature type="binding site" evidence="1">
    <location>
        <position position="92"/>
    </location>
    <ligand>
        <name>UDP-N-acetyl-alpha-D-glucosamine</name>
        <dbReference type="ChEBI" id="CHEBI:57705"/>
    </ligand>
</feature>
<feature type="binding site" evidence="1">
    <location>
        <begin position="121"/>
        <end position="125"/>
    </location>
    <ligand>
        <name>UDP-N-acetyl-alpha-D-glucosamine</name>
        <dbReference type="ChEBI" id="CHEBI:57705"/>
    </ligand>
</feature>
<feature type="binding site" evidence="1">
    <location>
        <position position="305"/>
    </location>
    <ligand>
        <name>UDP-N-acetyl-alpha-D-glucosamine</name>
        <dbReference type="ChEBI" id="CHEBI:57705"/>
    </ligand>
</feature>
<feature type="binding site" evidence="1">
    <location>
        <position position="327"/>
    </location>
    <ligand>
        <name>UDP-N-acetyl-alpha-D-glucosamine</name>
        <dbReference type="ChEBI" id="CHEBI:57705"/>
    </ligand>
</feature>
<feature type="modified residue" description="2-(S-cysteinyl)pyruvic acid O-phosphothioketal" evidence="1">
    <location>
        <position position="116"/>
    </location>
</feature>
<feature type="sequence conflict" description="In Ref. 1; CAA89875." evidence="2" ref="1">
    <original>A</original>
    <variation>S</variation>
    <location>
        <position position="374"/>
    </location>
</feature>